<comment type="function">
    <text evidence="3">Transcription factor that binds specifically to a 5'-AA[AG]G-3' consensus core sequence. Involved in the negative regulation of floral organ abscission by binding to the typical DOF 5'-AAAG-3' sequences in the promoter of ADPG2/PGAZAT, and by down-regulating its expression. ADPG2/PGAZAT is an abscission-related and cell wall hydrolyzing polygalacturonase. May act through the interaction with ZFP2, an abscission-related transcription factor.</text>
</comment>
<comment type="subunit">
    <text evidence="3">Interacts with ZFP2.</text>
</comment>
<comment type="subcellular location">
    <subcellularLocation>
        <location evidence="3">Nucleus</location>
    </subcellularLocation>
</comment>
<comment type="tissue specificity">
    <text evidence="3">Highly expressed at the base of all organs of the flower, especially in the abscission zone (AZ) of petals, stamens and sepals. Expressed at low levels in sepals, filaments, stigmatic papillae, tips of young siliques, and at the base of pedicels and leaf trichomes.</text>
</comment>
<comment type="miscellaneous">
    <text evidence="3">Plants over-expressing DOF4.7 fail in the abscission of floral organs (sepals, petals and stamens) after anthesis.</text>
</comment>
<comment type="sequence caution" evidence="5">
    <conflict type="erroneous initiation">
        <sequence resource="EMBL-CDS" id="CAB37540"/>
    </conflict>
    <text>Truncated N-terminus.</text>
</comment>
<comment type="sequence caution" evidence="5">
    <conflict type="erroneous initiation">
        <sequence resource="EMBL-CDS" id="CAB80465"/>
    </conflict>
    <text>Truncated N-terminus.</text>
</comment>
<feature type="chain" id="PRO_0000074290" description="Dof zinc finger protein DOF4.7">
    <location>
        <begin position="1"/>
        <end position="246"/>
    </location>
</feature>
<feature type="zinc finger region" description="Dof-type" evidence="1">
    <location>
        <begin position="41"/>
        <end position="95"/>
    </location>
</feature>
<feature type="region of interest" description="Disordered" evidence="2">
    <location>
        <begin position="1"/>
        <end position="39"/>
    </location>
</feature>
<feature type="region of interest" description="Disordered" evidence="2">
    <location>
        <begin position="216"/>
        <end position="235"/>
    </location>
</feature>
<feature type="compositionally biased region" description="Polar residues" evidence="2">
    <location>
        <begin position="1"/>
        <end position="12"/>
    </location>
</feature>
<feature type="compositionally biased region" description="Polar residues" evidence="2">
    <location>
        <begin position="27"/>
        <end position="37"/>
    </location>
</feature>
<feature type="binding site" evidence="1">
    <location>
        <position position="43"/>
    </location>
    <ligand>
        <name>Zn(2+)</name>
        <dbReference type="ChEBI" id="CHEBI:29105"/>
    </ligand>
</feature>
<feature type="binding site" evidence="1">
    <location>
        <position position="46"/>
    </location>
    <ligand>
        <name>Zn(2+)</name>
        <dbReference type="ChEBI" id="CHEBI:29105"/>
    </ligand>
</feature>
<feature type="binding site" evidence="1">
    <location>
        <position position="68"/>
    </location>
    <ligand>
        <name>Zn(2+)</name>
        <dbReference type="ChEBI" id="CHEBI:29105"/>
    </ligand>
</feature>
<feature type="binding site" evidence="1">
    <location>
        <position position="71"/>
    </location>
    <ligand>
        <name>Zn(2+)</name>
        <dbReference type="ChEBI" id="CHEBI:29105"/>
    </ligand>
</feature>
<protein>
    <recommendedName>
        <fullName evidence="5">Dof zinc finger protein DOF4.7</fullName>
        <shortName evidence="4">AtDOF4.7</shortName>
    </recommendedName>
    <alternativeName>
        <fullName evidence="4">Protein DNA BINDING WITH ONE FINGER 4.7</fullName>
    </alternativeName>
</protein>
<name>DOF47_ARATH</name>
<evidence type="ECO:0000255" key="1">
    <source>
        <dbReference type="PROSITE-ProRule" id="PRU00071"/>
    </source>
</evidence>
<evidence type="ECO:0000256" key="2">
    <source>
        <dbReference type="SAM" id="MobiDB-lite"/>
    </source>
</evidence>
<evidence type="ECO:0000269" key="3">
    <source>
    </source>
</evidence>
<evidence type="ECO:0000303" key="4">
    <source>
    </source>
</evidence>
<evidence type="ECO:0000305" key="5"/>
<accession>Q84K52</accession>
<accession>Q9SZK0</accession>
<reference key="1">
    <citation type="journal article" date="1999" name="Nature">
        <title>Sequence and analysis of chromosome 4 of the plant Arabidopsis thaliana.</title>
        <authorList>
            <person name="Mayer K.F.X."/>
            <person name="Schueller C."/>
            <person name="Wambutt R."/>
            <person name="Murphy G."/>
            <person name="Volckaert G."/>
            <person name="Pohl T."/>
            <person name="Duesterhoeft A."/>
            <person name="Stiekema W."/>
            <person name="Entian K.-D."/>
            <person name="Terryn N."/>
            <person name="Harris B."/>
            <person name="Ansorge W."/>
            <person name="Brandt P."/>
            <person name="Grivell L.A."/>
            <person name="Rieger M."/>
            <person name="Weichselgartner M."/>
            <person name="de Simone V."/>
            <person name="Obermaier B."/>
            <person name="Mache R."/>
            <person name="Mueller M."/>
            <person name="Kreis M."/>
            <person name="Delseny M."/>
            <person name="Puigdomenech P."/>
            <person name="Watson M."/>
            <person name="Schmidtheini T."/>
            <person name="Reichert B."/>
            <person name="Portetelle D."/>
            <person name="Perez-Alonso M."/>
            <person name="Boutry M."/>
            <person name="Bancroft I."/>
            <person name="Vos P."/>
            <person name="Hoheisel J."/>
            <person name="Zimmermann W."/>
            <person name="Wedler H."/>
            <person name="Ridley P."/>
            <person name="Langham S.-A."/>
            <person name="McCullagh B."/>
            <person name="Bilham L."/>
            <person name="Robben J."/>
            <person name="van der Schueren J."/>
            <person name="Grymonprez B."/>
            <person name="Chuang Y.-J."/>
            <person name="Vandenbussche F."/>
            <person name="Braeken M."/>
            <person name="Weltjens I."/>
            <person name="Voet M."/>
            <person name="Bastiaens I."/>
            <person name="Aert R."/>
            <person name="Defoor E."/>
            <person name="Weitzenegger T."/>
            <person name="Bothe G."/>
            <person name="Ramsperger U."/>
            <person name="Hilbert H."/>
            <person name="Braun M."/>
            <person name="Holzer E."/>
            <person name="Brandt A."/>
            <person name="Peters S."/>
            <person name="van Staveren M."/>
            <person name="Dirkse W."/>
            <person name="Mooijman P."/>
            <person name="Klein Lankhorst R."/>
            <person name="Rose M."/>
            <person name="Hauf J."/>
            <person name="Koetter P."/>
            <person name="Berneiser S."/>
            <person name="Hempel S."/>
            <person name="Feldpausch M."/>
            <person name="Lamberth S."/>
            <person name="Van den Daele H."/>
            <person name="De Keyser A."/>
            <person name="Buysshaert C."/>
            <person name="Gielen J."/>
            <person name="Villarroel R."/>
            <person name="De Clercq R."/>
            <person name="van Montagu M."/>
            <person name="Rogers J."/>
            <person name="Cronin A."/>
            <person name="Quail M.A."/>
            <person name="Bray-Allen S."/>
            <person name="Clark L."/>
            <person name="Doggett J."/>
            <person name="Hall S."/>
            <person name="Kay M."/>
            <person name="Lennard N."/>
            <person name="McLay K."/>
            <person name="Mayes R."/>
            <person name="Pettett A."/>
            <person name="Rajandream M.A."/>
            <person name="Lyne M."/>
            <person name="Benes V."/>
            <person name="Rechmann S."/>
            <person name="Borkova D."/>
            <person name="Bloecker H."/>
            <person name="Scharfe M."/>
            <person name="Grimm M."/>
            <person name="Loehnert T.-H."/>
            <person name="Dose S."/>
            <person name="de Haan M."/>
            <person name="Maarse A.C."/>
            <person name="Schaefer M."/>
            <person name="Mueller-Auer S."/>
            <person name="Gabel C."/>
            <person name="Fuchs M."/>
            <person name="Fartmann B."/>
            <person name="Granderath K."/>
            <person name="Dauner D."/>
            <person name="Herzl A."/>
            <person name="Neumann S."/>
            <person name="Argiriou A."/>
            <person name="Vitale D."/>
            <person name="Liguori R."/>
            <person name="Piravandi E."/>
            <person name="Massenet O."/>
            <person name="Quigley F."/>
            <person name="Clabauld G."/>
            <person name="Muendlein A."/>
            <person name="Felber R."/>
            <person name="Schnabl S."/>
            <person name="Hiller R."/>
            <person name="Schmidt W."/>
            <person name="Lecharny A."/>
            <person name="Aubourg S."/>
            <person name="Chefdor F."/>
            <person name="Cooke R."/>
            <person name="Berger C."/>
            <person name="Monfort A."/>
            <person name="Casacuberta E."/>
            <person name="Gibbons T."/>
            <person name="Weber N."/>
            <person name="Vandenbol M."/>
            <person name="Bargues M."/>
            <person name="Terol J."/>
            <person name="Torres A."/>
            <person name="Perez-Perez A."/>
            <person name="Purnelle B."/>
            <person name="Bent E."/>
            <person name="Johnson S."/>
            <person name="Tacon D."/>
            <person name="Jesse T."/>
            <person name="Heijnen L."/>
            <person name="Schwarz S."/>
            <person name="Scholler P."/>
            <person name="Heber S."/>
            <person name="Francs P."/>
            <person name="Bielke C."/>
            <person name="Frishman D."/>
            <person name="Haase D."/>
            <person name="Lemcke K."/>
            <person name="Mewes H.-W."/>
            <person name="Stocker S."/>
            <person name="Zaccaria P."/>
            <person name="Bevan M."/>
            <person name="Wilson R.K."/>
            <person name="de la Bastide M."/>
            <person name="Habermann K."/>
            <person name="Parnell L."/>
            <person name="Dedhia N."/>
            <person name="Gnoj L."/>
            <person name="Schutz K."/>
            <person name="Huang E."/>
            <person name="Spiegel L."/>
            <person name="Sekhon M."/>
            <person name="Murray J."/>
            <person name="Sheet P."/>
            <person name="Cordes M."/>
            <person name="Abu-Threideh J."/>
            <person name="Stoneking T."/>
            <person name="Kalicki J."/>
            <person name="Graves T."/>
            <person name="Harmon G."/>
            <person name="Edwards J."/>
            <person name="Latreille P."/>
            <person name="Courtney L."/>
            <person name="Cloud J."/>
            <person name="Abbott A."/>
            <person name="Scott K."/>
            <person name="Johnson D."/>
            <person name="Minx P."/>
            <person name="Bentley D."/>
            <person name="Fulton B."/>
            <person name="Miller N."/>
            <person name="Greco T."/>
            <person name="Kemp K."/>
            <person name="Kramer J."/>
            <person name="Fulton L."/>
            <person name="Mardis E."/>
            <person name="Dante M."/>
            <person name="Pepin K."/>
            <person name="Hillier L.W."/>
            <person name="Nelson J."/>
            <person name="Spieth J."/>
            <person name="Ryan E."/>
            <person name="Andrews S."/>
            <person name="Geisel C."/>
            <person name="Layman D."/>
            <person name="Du H."/>
            <person name="Ali J."/>
            <person name="Berghoff A."/>
            <person name="Jones K."/>
            <person name="Drone K."/>
            <person name="Cotton M."/>
            <person name="Joshu C."/>
            <person name="Antonoiu B."/>
            <person name="Zidanic M."/>
            <person name="Strong C."/>
            <person name="Sun H."/>
            <person name="Lamar B."/>
            <person name="Yordan C."/>
            <person name="Ma P."/>
            <person name="Zhong J."/>
            <person name="Preston R."/>
            <person name="Vil D."/>
            <person name="Shekher M."/>
            <person name="Matero A."/>
            <person name="Shah R."/>
            <person name="Swaby I.K."/>
            <person name="O'Shaughnessy A."/>
            <person name="Rodriguez M."/>
            <person name="Hoffman J."/>
            <person name="Till S."/>
            <person name="Granat S."/>
            <person name="Shohdy N."/>
            <person name="Hasegawa A."/>
            <person name="Hameed A."/>
            <person name="Lodhi M."/>
            <person name="Johnson A."/>
            <person name="Chen E."/>
            <person name="Marra M.A."/>
            <person name="Martienssen R."/>
            <person name="McCombie W.R."/>
        </authorList>
    </citation>
    <scope>NUCLEOTIDE SEQUENCE [LARGE SCALE GENOMIC DNA]</scope>
    <source>
        <strain>cv. Columbia</strain>
    </source>
</reference>
<reference key="2">
    <citation type="journal article" date="2017" name="Plant J.">
        <title>Araport11: a complete reannotation of the Arabidopsis thaliana reference genome.</title>
        <authorList>
            <person name="Cheng C.Y."/>
            <person name="Krishnakumar V."/>
            <person name="Chan A.P."/>
            <person name="Thibaud-Nissen F."/>
            <person name="Schobel S."/>
            <person name="Town C.D."/>
        </authorList>
    </citation>
    <scope>GENOME REANNOTATION</scope>
    <source>
        <strain>cv. Columbia</strain>
    </source>
</reference>
<reference key="3">
    <citation type="journal article" date="2003" name="Science">
        <title>Empirical analysis of transcriptional activity in the Arabidopsis genome.</title>
        <authorList>
            <person name="Yamada K."/>
            <person name="Lim J."/>
            <person name="Dale J.M."/>
            <person name="Chen H."/>
            <person name="Shinn P."/>
            <person name="Palm C.J."/>
            <person name="Southwick A.M."/>
            <person name="Wu H.C."/>
            <person name="Kim C.J."/>
            <person name="Nguyen M."/>
            <person name="Pham P.K."/>
            <person name="Cheuk R.F."/>
            <person name="Karlin-Newmann G."/>
            <person name="Liu S.X."/>
            <person name="Lam B."/>
            <person name="Sakano H."/>
            <person name="Wu T."/>
            <person name="Yu G."/>
            <person name="Miranda M."/>
            <person name="Quach H.L."/>
            <person name="Tripp M."/>
            <person name="Chang C.H."/>
            <person name="Lee J.M."/>
            <person name="Toriumi M.J."/>
            <person name="Chan M.M."/>
            <person name="Tang C.C."/>
            <person name="Onodera C.S."/>
            <person name="Deng J.M."/>
            <person name="Akiyama K."/>
            <person name="Ansari Y."/>
            <person name="Arakawa T."/>
            <person name="Banh J."/>
            <person name="Banno F."/>
            <person name="Bowser L."/>
            <person name="Brooks S.Y."/>
            <person name="Carninci P."/>
            <person name="Chao Q."/>
            <person name="Choy N."/>
            <person name="Enju A."/>
            <person name="Goldsmith A.D."/>
            <person name="Gurjal M."/>
            <person name="Hansen N.F."/>
            <person name="Hayashizaki Y."/>
            <person name="Johnson-Hopson C."/>
            <person name="Hsuan V.W."/>
            <person name="Iida K."/>
            <person name="Karnes M."/>
            <person name="Khan S."/>
            <person name="Koesema E."/>
            <person name="Ishida J."/>
            <person name="Jiang P.X."/>
            <person name="Jones T."/>
            <person name="Kawai J."/>
            <person name="Kamiya A."/>
            <person name="Meyers C."/>
            <person name="Nakajima M."/>
            <person name="Narusaka M."/>
            <person name="Seki M."/>
            <person name="Sakurai T."/>
            <person name="Satou M."/>
            <person name="Tamse R."/>
            <person name="Vaysberg M."/>
            <person name="Wallender E.K."/>
            <person name="Wong C."/>
            <person name="Yamamura Y."/>
            <person name="Yuan S."/>
            <person name="Shinozaki K."/>
            <person name="Davis R.W."/>
            <person name="Theologis A."/>
            <person name="Ecker J.R."/>
        </authorList>
    </citation>
    <scope>NUCLEOTIDE SEQUENCE [LARGE SCALE MRNA]</scope>
    <source>
        <strain>cv. Columbia</strain>
    </source>
</reference>
<reference key="4">
    <citation type="journal article" date="2002" name="Trends Plant Sci.">
        <title>The Dof family of plant transcription factors.</title>
        <authorList>
            <person name="Yanagisawa S."/>
        </authorList>
    </citation>
    <scope>GENE FAMILY</scope>
    <scope>NOMENCLATURE</scope>
</reference>
<reference key="5">
    <citation type="journal article" date="2010" name="Plant Physiol.">
        <title>Overexpression of AtDOF4.7, an Arabidopsis DOF family transcription factor, induces floral organ abscission deficiency in Arabidopsis.</title>
        <authorList>
            <person name="Wei P.C."/>
            <person name="Tan F."/>
            <person name="Gao X.Q."/>
            <person name="Zhang X.Q."/>
            <person name="Wang G.Q."/>
            <person name="Xu H."/>
            <person name="Li L.J."/>
            <person name="Chen J."/>
            <person name="Wang X.C."/>
        </authorList>
    </citation>
    <scope>FUNCTION</scope>
    <scope>INTERACTION WITH ZFP2</scope>
    <scope>SUBCELLULAR LOCATION</scope>
    <scope>TISSUE SPECIFICITY</scope>
</reference>
<keyword id="KW-0238">DNA-binding</keyword>
<keyword id="KW-0479">Metal-binding</keyword>
<keyword id="KW-0539">Nucleus</keyword>
<keyword id="KW-1185">Reference proteome</keyword>
<keyword id="KW-0804">Transcription</keyword>
<keyword id="KW-0805">Transcription regulation</keyword>
<keyword id="KW-0862">Zinc</keyword>
<keyword id="KW-0863">Zinc-finger</keyword>
<gene>
    <name evidence="4" type="primary">DOF4.7</name>
    <name type="ordered locus">At4g38000</name>
    <name type="ORF">F20D10.120</name>
</gene>
<organism>
    <name type="scientific">Arabidopsis thaliana</name>
    <name type="common">Mouse-ear cress</name>
    <dbReference type="NCBI Taxonomy" id="3702"/>
    <lineage>
        <taxon>Eukaryota</taxon>
        <taxon>Viridiplantae</taxon>
        <taxon>Streptophyta</taxon>
        <taxon>Embryophyta</taxon>
        <taxon>Tracheophyta</taxon>
        <taxon>Spermatophyta</taxon>
        <taxon>Magnoliopsida</taxon>
        <taxon>eudicotyledons</taxon>
        <taxon>Gunneridae</taxon>
        <taxon>Pentapetalae</taxon>
        <taxon>rosids</taxon>
        <taxon>malvids</taxon>
        <taxon>Brassicales</taxon>
        <taxon>Brassicaceae</taxon>
        <taxon>Camelineae</taxon>
        <taxon>Arabidopsis</taxon>
    </lineage>
</organism>
<dbReference type="EMBL" id="AL035538">
    <property type="protein sequence ID" value="CAB37540.1"/>
    <property type="status" value="ALT_INIT"/>
    <property type="molecule type" value="Genomic_DNA"/>
</dbReference>
<dbReference type="EMBL" id="AL161592">
    <property type="protein sequence ID" value="CAB80465.1"/>
    <property type="status" value="ALT_INIT"/>
    <property type="molecule type" value="Genomic_DNA"/>
</dbReference>
<dbReference type="EMBL" id="CP002687">
    <property type="protein sequence ID" value="AEE86862.1"/>
    <property type="molecule type" value="Genomic_DNA"/>
</dbReference>
<dbReference type="EMBL" id="BT005767">
    <property type="protein sequence ID" value="AAO64171.1"/>
    <property type="molecule type" value="mRNA"/>
</dbReference>
<dbReference type="EMBL" id="BT006092">
    <property type="protein sequence ID" value="AAP04077.1"/>
    <property type="molecule type" value="mRNA"/>
</dbReference>
<dbReference type="PIR" id="T05627">
    <property type="entry name" value="T05627"/>
</dbReference>
<dbReference type="RefSeq" id="NP_195513.2">
    <property type="nucleotide sequence ID" value="NM_119961.4"/>
</dbReference>
<dbReference type="STRING" id="3702.Q84K52"/>
<dbReference type="PaxDb" id="3702-AT4G38000.1"/>
<dbReference type="ProteomicsDB" id="222123"/>
<dbReference type="EnsemblPlants" id="AT4G38000.1">
    <property type="protein sequence ID" value="AT4G38000.1"/>
    <property type="gene ID" value="AT4G38000"/>
</dbReference>
<dbReference type="GeneID" id="829956"/>
<dbReference type="Gramene" id="AT4G38000.1">
    <property type="protein sequence ID" value="AT4G38000.1"/>
    <property type="gene ID" value="AT4G38000"/>
</dbReference>
<dbReference type="KEGG" id="ath:AT4G38000"/>
<dbReference type="Araport" id="AT4G38000"/>
<dbReference type="TAIR" id="AT4G38000">
    <property type="gene designation" value="DOF4.7"/>
</dbReference>
<dbReference type="eggNOG" id="ENOG502R06Q">
    <property type="taxonomic scope" value="Eukaryota"/>
</dbReference>
<dbReference type="HOGENOM" id="CLU_1148595_0_0_1"/>
<dbReference type="InParanoid" id="Q84K52"/>
<dbReference type="OMA" id="YMFPLDP"/>
<dbReference type="OrthoDB" id="1062359at2759"/>
<dbReference type="PhylomeDB" id="Q84K52"/>
<dbReference type="PRO" id="PR:Q84K52"/>
<dbReference type="Proteomes" id="UP000006548">
    <property type="component" value="Chromosome 4"/>
</dbReference>
<dbReference type="ExpressionAtlas" id="Q84K52">
    <property type="expression patterns" value="baseline and differential"/>
</dbReference>
<dbReference type="GO" id="GO:0005634">
    <property type="term" value="C:nucleus"/>
    <property type="evidence" value="ECO:0000314"/>
    <property type="project" value="TAIR"/>
</dbReference>
<dbReference type="GO" id="GO:0003677">
    <property type="term" value="F:DNA binding"/>
    <property type="evidence" value="ECO:0000314"/>
    <property type="project" value="TAIR"/>
</dbReference>
<dbReference type="GO" id="GO:0003700">
    <property type="term" value="F:DNA-binding transcription factor activity"/>
    <property type="evidence" value="ECO:0000250"/>
    <property type="project" value="TAIR"/>
</dbReference>
<dbReference type="GO" id="GO:0008270">
    <property type="term" value="F:zinc ion binding"/>
    <property type="evidence" value="ECO:0007669"/>
    <property type="project" value="UniProtKB-KW"/>
</dbReference>
<dbReference type="GO" id="GO:0010227">
    <property type="term" value="P:floral organ abscission"/>
    <property type="evidence" value="ECO:0000315"/>
    <property type="project" value="TAIR"/>
</dbReference>
<dbReference type="GO" id="GO:0045893">
    <property type="term" value="P:positive regulation of DNA-templated transcription"/>
    <property type="evidence" value="ECO:0000314"/>
    <property type="project" value="TAIR"/>
</dbReference>
<dbReference type="GO" id="GO:0006355">
    <property type="term" value="P:regulation of DNA-templated transcription"/>
    <property type="evidence" value="ECO:0000304"/>
    <property type="project" value="TAIR"/>
</dbReference>
<dbReference type="InterPro" id="IPR045174">
    <property type="entry name" value="Dof"/>
</dbReference>
<dbReference type="InterPro" id="IPR003851">
    <property type="entry name" value="Znf_Dof"/>
</dbReference>
<dbReference type="PANTHER" id="PTHR31992">
    <property type="entry name" value="DOF ZINC FINGER PROTEIN DOF1.4-RELATED"/>
    <property type="match status" value="1"/>
</dbReference>
<dbReference type="PANTHER" id="PTHR31992:SF149">
    <property type="entry name" value="DOF ZINC FINGER PROTEIN DOF4.7"/>
    <property type="match status" value="1"/>
</dbReference>
<dbReference type="Pfam" id="PF02701">
    <property type="entry name" value="Zn_ribbon_Dof"/>
    <property type="match status" value="1"/>
</dbReference>
<dbReference type="PROSITE" id="PS01361">
    <property type="entry name" value="ZF_DOF_1"/>
    <property type="match status" value="1"/>
</dbReference>
<dbReference type="PROSITE" id="PS50884">
    <property type="entry name" value="ZF_DOF_2"/>
    <property type="match status" value="1"/>
</dbReference>
<proteinExistence type="evidence at protein level"/>
<sequence>MMTSSHQSNTTGFKPRRIKTTAKPPRQINNKEPSPATQPVLKCPRCDSVNTKFCYYNNYSLSQPRHYCKNCRRYWTRGGALRNVPIGGSTRNKNKPCSLQVISSPPLFSNGTSSASRELVRNHPSTAMMMMSSGGFSGYMFPLDPNFNLASSSIESLSSFNQDLHQKLQQQRLVTSMFLQDSLPVNEKTVMFQNVELIPPSTVTTDWVFDRFATGGGATSGNHEDNDDGEGNLGNWFHNANNNALL</sequence>